<gene>
    <name evidence="2" type="primary">rpsL</name>
    <name type="ordered locus">RBE_1162</name>
</gene>
<dbReference type="EMBL" id="CP000087">
    <property type="protein sequence ID" value="ABE05243.1"/>
    <property type="molecule type" value="Genomic_DNA"/>
</dbReference>
<dbReference type="RefSeq" id="WP_011477821.1">
    <property type="nucleotide sequence ID" value="NC_007940.1"/>
</dbReference>
<dbReference type="SMR" id="Q1RHC1"/>
<dbReference type="KEGG" id="rbe:RBE_1162"/>
<dbReference type="eggNOG" id="COG0048">
    <property type="taxonomic scope" value="Bacteria"/>
</dbReference>
<dbReference type="HOGENOM" id="CLU_104295_1_3_5"/>
<dbReference type="OrthoDB" id="9802366at2"/>
<dbReference type="Proteomes" id="UP000001951">
    <property type="component" value="Chromosome"/>
</dbReference>
<dbReference type="GO" id="GO:0015935">
    <property type="term" value="C:small ribosomal subunit"/>
    <property type="evidence" value="ECO:0007669"/>
    <property type="project" value="InterPro"/>
</dbReference>
<dbReference type="GO" id="GO:0019843">
    <property type="term" value="F:rRNA binding"/>
    <property type="evidence" value="ECO:0007669"/>
    <property type="project" value="UniProtKB-UniRule"/>
</dbReference>
<dbReference type="GO" id="GO:0003735">
    <property type="term" value="F:structural constituent of ribosome"/>
    <property type="evidence" value="ECO:0007669"/>
    <property type="project" value="InterPro"/>
</dbReference>
<dbReference type="GO" id="GO:0000049">
    <property type="term" value="F:tRNA binding"/>
    <property type="evidence" value="ECO:0007669"/>
    <property type="project" value="UniProtKB-UniRule"/>
</dbReference>
<dbReference type="GO" id="GO:0006412">
    <property type="term" value="P:translation"/>
    <property type="evidence" value="ECO:0007669"/>
    <property type="project" value="UniProtKB-UniRule"/>
</dbReference>
<dbReference type="CDD" id="cd03368">
    <property type="entry name" value="Ribosomal_S12"/>
    <property type="match status" value="1"/>
</dbReference>
<dbReference type="FunFam" id="2.40.50.140:FF:000192">
    <property type="entry name" value="Mitochondrial ribosomal protein S12"/>
    <property type="match status" value="1"/>
</dbReference>
<dbReference type="Gene3D" id="2.40.50.140">
    <property type="entry name" value="Nucleic acid-binding proteins"/>
    <property type="match status" value="1"/>
</dbReference>
<dbReference type="HAMAP" id="MF_00403_B">
    <property type="entry name" value="Ribosomal_uS12_B"/>
    <property type="match status" value="1"/>
</dbReference>
<dbReference type="InterPro" id="IPR012340">
    <property type="entry name" value="NA-bd_OB-fold"/>
</dbReference>
<dbReference type="InterPro" id="IPR006032">
    <property type="entry name" value="Ribosomal_uS12"/>
</dbReference>
<dbReference type="InterPro" id="IPR005679">
    <property type="entry name" value="Ribosomal_uS12_bac"/>
</dbReference>
<dbReference type="NCBIfam" id="TIGR00981">
    <property type="entry name" value="rpsL_bact"/>
    <property type="match status" value="1"/>
</dbReference>
<dbReference type="PANTHER" id="PTHR11652">
    <property type="entry name" value="30S RIBOSOMAL PROTEIN S12 FAMILY MEMBER"/>
    <property type="match status" value="1"/>
</dbReference>
<dbReference type="Pfam" id="PF00164">
    <property type="entry name" value="Ribosom_S12_S23"/>
    <property type="match status" value="1"/>
</dbReference>
<dbReference type="PIRSF" id="PIRSF002133">
    <property type="entry name" value="Ribosomal_S12/S23"/>
    <property type="match status" value="1"/>
</dbReference>
<dbReference type="PRINTS" id="PR01034">
    <property type="entry name" value="RIBOSOMALS12"/>
</dbReference>
<dbReference type="SUPFAM" id="SSF50249">
    <property type="entry name" value="Nucleic acid-binding proteins"/>
    <property type="match status" value="1"/>
</dbReference>
<dbReference type="PROSITE" id="PS00055">
    <property type="entry name" value="RIBOSOMAL_S12"/>
    <property type="match status" value="1"/>
</dbReference>
<name>RS12_RICBR</name>
<accession>Q1RHC1</accession>
<reference key="1">
    <citation type="journal article" date="2006" name="PLoS Genet.">
        <title>Genome sequence of Rickettsia bellii illuminates the role of amoebae in gene exchanges between intracellular pathogens.</title>
        <authorList>
            <person name="Ogata H."/>
            <person name="La Scola B."/>
            <person name="Audic S."/>
            <person name="Renesto P."/>
            <person name="Blanc G."/>
            <person name="Robert C."/>
            <person name="Fournier P.-E."/>
            <person name="Claverie J.-M."/>
            <person name="Raoult D."/>
        </authorList>
    </citation>
    <scope>NUCLEOTIDE SEQUENCE [LARGE SCALE GENOMIC DNA]</scope>
    <source>
        <strain>RML369-C</strain>
    </source>
</reference>
<organism>
    <name type="scientific">Rickettsia bellii (strain RML369-C)</name>
    <dbReference type="NCBI Taxonomy" id="336407"/>
    <lineage>
        <taxon>Bacteria</taxon>
        <taxon>Pseudomonadati</taxon>
        <taxon>Pseudomonadota</taxon>
        <taxon>Alphaproteobacteria</taxon>
        <taxon>Rickettsiales</taxon>
        <taxon>Rickettsiaceae</taxon>
        <taxon>Rickettsieae</taxon>
        <taxon>Rickettsia</taxon>
        <taxon>belli group</taxon>
    </lineage>
</organism>
<keyword id="KW-0488">Methylation</keyword>
<keyword id="KW-0687">Ribonucleoprotein</keyword>
<keyword id="KW-0689">Ribosomal protein</keyword>
<keyword id="KW-0694">RNA-binding</keyword>
<keyword id="KW-0699">rRNA-binding</keyword>
<keyword id="KW-0820">tRNA-binding</keyword>
<sequence>MPTYNQLVRFERKSKVRKTKSPALEANPFKSGVCLVVKTVTPKKPNSALRKVATVRLSNKRTVNVYIPGEKHSVKEHDRVLVRGGQVPDLPGVKYHVVLGAYDIAGVKGRKQGRSRYGAPRKQVVATKK</sequence>
<protein>
    <recommendedName>
        <fullName evidence="2">Small ribosomal subunit protein uS12</fullName>
    </recommendedName>
    <alternativeName>
        <fullName evidence="4">30S ribosomal protein S12</fullName>
    </alternativeName>
</protein>
<feature type="chain" id="PRO_0000263585" description="Small ribosomal subunit protein uS12">
    <location>
        <begin position="1"/>
        <end position="129"/>
    </location>
</feature>
<feature type="region of interest" description="Disordered" evidence="3">
    <location>
        <begin position="110"/>
        <end position="129"/>
    </location>
</feature>
<feature type="modified residue" description="3-methylthioaspartic acid" evidence="1">
    <location>
        <position position="89"/>
    </location>
</feature>
<evidence type="ECO:0000250" key="1"/>
<evidence type="ECO:0000255" key="2">
    <source>
        <dbReference type="HAMAP-Rule" id="MF_00403"/>
    </source>
</evidence>
<evidence type="ECO:0000256" key="3">
    <source>
        <dbReference type="SAM" id="MobiDB-lite"/>
    </source>
</evidence>
<evidence type="ECO:0000305" key="4"/>
<comment type="function">
    <text evidence="2">With S4 and S5 plays an important role in translational accuracy.</text>
</comment>
<comment type="function">
    <text evidence="2">Interacts with and stabilizes bases of the 16S rRNA that are involved in tRNA selection in the A site and with the mRNA backbone. Located at the interface of the 30S and 50S subunits, it traverses the body of the 30S subunit contacting proteins on the other side and probably holding the rRNA structure together. The combined cluster of proteins S8, S12 and S17 appears to hold together the shoulder and platform of the 30S subunit.</text>
</comment>
<comment type="subunit">
    <text evidence="2">Part of the 30S ribosomal subunit. Contacts proteins S8 and S17. May interact with IF1 in the 30S initiation complex.</text>
</comment>
<comment type="similarity">
    <text evidence="2">Belongs to the universal ribosomal protein uS12 family.</text>
</comment>
<proteinExistence type="inferred from homology"/>